<comment type="function">
    <text evidence="1">Together with its co-chaperonin GroES, plays an essential role in assisting protein folding. The GroEL-GroES system forms a nano-cage that allows encapsulation of the non-native substrate proteins and provides a physical environment optimized to promote and accelerate protein folding.</text>
</comment>
<comment type="catalytic activity">
    <reaction evidence="1">
        <text>ATP + H2O + a folded polypeptide = ADP + phosphate + an unfolded polypeptide.</text>
        <dbReference type="EC" id="5.6.1.7"/>
    </reaction>
</comment>
<comment type="subunit">
    <text evidence="1">Forms a cylinder of 14 subunits composed of two heptameric rings stacked back-to-back. Interacts with the co-chaperonin GroES.</text>
</comment>
<comment type="subcellular location">
    <subcellularLocation>
        <location evidence="1">Cytoplasm</location>
    </subcellularLocation>
</comment>
<comment type="similarity">
    <text evidence="1">Belongs to the chaperonin (HSP60) family.</text>
</comment>
<proteinExistence type="inferred from homology"/>
<dbReference type="EC" id="5.6.1.7" evidence="1"/>
<dbReference type="EMBL" id="CP000410">
    <property type="protein sequence ID" value="ABJ54932.1"/>
    <property type="molecule type" value="Genomic_DNA"/>
</dbReference>
<dbReference type="RefSeq" id="WP_000031573.1">
    <property type="nucleotide sequence ID" value="NZ_JAMLJR010000010.1"/>
</dbReference>
<dbReference type="SMR" id="Q04IQ3"/>
<dbReference type="PaxDb" id="373153-SPD_1709"/>
<dbReference type="GeneID" id="45652869"/>
<dbReference type="KEGG" id="spd:SPD_1709"/>
<dbReference type="eggNOG" id="COG0459">
    <property type="taxonomic scope" value="Bacteria"/>
</dbReference>
<dbReference type="HOGENOM" id="CLU_016503_3_0_9"/>
<dbReference type="BioCyc" id="SPNE373153:G1G6V-1845-MONOMER"/>
<dbReference type="Proteomes" id="UP000001452">
    <property type="component" value="Chromosome"/>
</dbReference>
<dbReference type="GO" id="GO:0005737">
    <property type="term" value="C:cytoplasm"/>
    <property type="evidence" value="ECO:0007669"/>
    <property type="project" value="UniProtKB-SubCell"/>
</dbReference>
<dbReference type="GO" id="GO:0005524">
    <property type="term" value="F:ATP binding"/>
    <property type="evidence" value="ECO:0007669"/>
    <property type="project" value="UniProtKB-UniRule"/>
</dbReference>
<dbReference type="GO" id="GO:0140662">
    <property type="term" value="F:ATP-dependent protein folding chaperone"/>
    <property type="evidence" value="ECO:0007669"/>
    <property type="project" value="InterPro"/>
</dbReference>
<dbReference type="GO" id="GO:0016853">
    <property type="term" value="F:isomerase activity"/>
    <property type="evidence" value="ECO:0007669"/>
    <property type="project" value="UniProtKB-KW"/>
</dbReference>
<dbReference type="GO" id="GO:0051082">
    <property type="term" value="F:unfolded protein binding"/>
    <property type="evidence" value="ECO:0007669"/>
    <property type="project" value="UniProtKB-UniRule"/>
</dbReference>
<dbReference type="GO" id="GO:0042026">
    <property type="term" value="P:protein refolding"/>
    <property type="evidence" value="ECO:0007669"/>
    <property type="project" value="UniProtKB-UniRule"/>
</dbReference>
<dbReference type="CDD" id="cd03344">
    <property type="entry name" value="GroEL"/>
    <property type="match status" value="1"/>
</dbReference>
<dbReference type="FunFam" id="1.10.560.10:FF:000001">
    <property type="entry name" value="60 kDa chaperonin"/>
    <property type="match status" value="1"/>
</dbReference>
<dbReference type="FunFam" id="3.50.7.10:FF:000001">
    <property type="entry name" value="60 kDa chaperonin"/>
    <property type="match status" value="1"/>
</dbReference>
<dbReference type="Gene3D" id="3.50.7.10">
    <property type="entry name" value="GroEL"/>
    <property type="match status" value="1"/>
</dbReference>
<dbReference type="Gene3D" id="1.10.560.10">
    <property type="entry name" value="GroEL-like equatorial domain"/>
    <property type="match status" value="1"/>
</dbReference>
<dbReference type="Gene3D" id="3.30.260.10">
    <property type="entry name" value="TCP-1-like chaperonin intermediate domain"/>
    <property type="match status" value="1"/>
</dbReference>
<dbReference type="HAMAP" id="MF_00600">
    <property type="entry name" value="CH60"/>
    <property type="match status" value="1"/>
</dbReference>
<dbReference type="InterPro" id="IPR018370">
    <property type="entry name" value="Chaperonin_Cpn60_CS"/>
</dbReference>
<dbReference type="InterPro" id="IPR001844">
    <property type="entry name" value="Cpn60/GroEL"/>
</dbReference>
<dbReference type="InterPro" id="IPR002423">
    <property type="entry name" value="Cpn60/GroEL/TCP-1"/>
</dbReference>
<dbReference type="InterPro" id="IPR027409">
    <property type="entry name" value="GroEL-like_apical_dom_sf"/>
</dbReference>
<dbReference type="InterPro" id="IPR027413">
    <property type="entry name" value="GROEL-like_equatorial_sf"/>
</dbReference>
<dbReference type="InterPro" id="IPR027410">
    <property type="entry name" value="TCP-1-like_intermed_sf"/>
</dbReference>
<dbReference type="NCBIfam" id="TIGR02348">
    <property type="entry name" value="GroEL"/>
    <property type="match status" value="1"/>
</dbReference>
<dbReference type="NCBIfam" id="NF000592">
    <property type="entry name" value="PRK00013.1"/>
    <property type="match status" value="1"/>
</dbReference>
<dbReference type="NCBIfam" id="NF009487">
    <property type="entry name" value="PRK12849.1"/>
    <property type="match status" value="1"/>
</dbReference>
<dbReference type="NCBIfam" id="NF009488">
    <property type="entry name" value="PRK12850.1"/>
    <property type="match status" value="1"/>
</dbReference>
<dbReference type="NCBIfam" id="NF009489">
    <property type="entry name" value="PRK12851.1"/>
    <property type="match status" value="1"/>
</dbReference>
<dbReference type="PANTHER" id="PTHR45633">
    <property type="entry name" value="60 KDA HEAT SHOCK PROTEIN, MITOCHONDRIAL"/>
    <property type="match status" value="1"/>
</dbReference>
<dbReference type="Pfam" id="PF00118">
    <property type="entry name" value="Cpn60_TCP1"/>
    <property type="match status" value="1"/>
</dbReference>
<dbReference type="PRINTS" id="PR00298">
    <property type="entry name" value="CHAPERONIN60"/>
</dbReference>
<dbReference type="SUPFAM" id="SSF52029">
    <property type="entry name" value="GroEL apical domain-like"/>
    <property type="match status" value="1"/>
</dbReference>
<dbReference type="SUPFAM" id="SSF48592">
    <property type="entry name" value="GroEL equatorial domain-like"/>
    <property type="match status" value="1"/>
</dbReference>
<dbReference type="SUPFAM" id="SSF54849">
    <property type="entry name" value="GroEL-intermediate domain like"/>
    <property type="match status" value="1"/>
</dbReference>
<dbReference type="PROSITE" id="PS00296">
    <property type="entry name" value="CHAPERONINS_CPN60"/>
    <property type="match status" value="1"/>
</dbReference>
<organism>
    <name type="scientific">Streptococcus pneumoniae serotype 2 (strain D39 / NCTC 7466)</name>
    <dbReference type="NCBI Taxonomy" id="373153"/>
    <lineage>
        <taxon>Bacteria</taxon>
        <taxon>Bacillati</taxon>
        <taxon>Bacillota</taxon>
        <taxon>Bacilli</taxon>
        <taxon>Lactobacillales</taxon>
        <taxon>Streptococcaceae</taxon>
        <taxon>Streptococcus</taxon>
    </lineage>
</organism>
<keyword id="KW-0067">ATP-binding</keyword>
<keyword id="KW-0143">Chaperone</keyword>
<keyword id="KW-0963">Cytoplasm</keyword>
<keyword id="KW-0413">Isomerase</keyword>
<keyword id="KW-0547">Nucleotide-binding</keyword>
<keyword id="KW-1185">Reference proteome</keyword>
<protein>
    <recommendedName>
        <fullName evidence="1">Chaperonin GroEL</fullName>
        <ecNumber evidence="1">5.6.1.7</ecNumber>
    </recommendedName>
    <alternativeName>
        <fullName evidence="1">60 kDa chaperonin</fullName>
    </alternativeName>
    <alternativeName>
        <fullName evidence="1">Chaperonin-60</fullName>
        <shortName evidence="1">Cpn60</shortName>
    </alternativeName>
</protein>
<sequence length="540" mass="57095">MSKEIKFSSDARSAMVRGVDILADTVKVTLGPKGRNVVLEKSFGSPLITNDGVTIAKEIELEDHFENMGAKLVSEVASKTNDIAGDGTTTATVLTQAIVREGIKNVTAGANPIGIRRGIETAVAAAVEALKNNAIPVANKEAIAQVAAVSSRSEKVGEYISEAMEKVGKDGVITIEESRGMETELEVVEGMQFDRGYLSQYMVTDSEKMVADLENPYILITDKKISNIQEILPLLESILQSNRPLLIIADDVDGEALPTLVLNKIRGTFNVVAVKAPGFGDRRKAMLEDIAILTGGTVITEDLGLELKDATIEALGQAARVTVDKDSTVIVEGAGNPEAISHRVAVIKSQIETTTSEFDREKLQERLAKLSGGVAVIKVGAATETELKEMKLRIEDALNATRAAVEEGIVAGGGTALANVIPAVATLELTGDEATGRNIVLRALEEPVRQIAHNAGFEGSIVIDRLKNAELGIGFNAATGEWVNMIDQGIIDPVKVSRSALQNAASVASLILTTEAVVANKPEPVAPAPAMDPSMMGGMM</sequence>
<accession>Q04IQ3</accession>
<gene>
    <name evidence="1" type="primary">groEL</name>
    <name evidence="1" type="synonym">groL</name>
    <name type="ordered locus">SPD_1709</name>
</gene>
<name>CH60_STRP2</name>
<reference key="1">
    <citation type="journal article" date="2007" name="J. Bacteriol.">
        <title>Genome sequence of Avery's virulent serotype 2 strain D39 of Streptococcus pneumoniae and comparison with that of unencapsulated laboratory strain R6.</title>
        <authorList>
            <person name="Lanie J.A."/>
            <person name="Ng W.-L."/>
            <person name="Kazmierczak K.M."/>
            <person name="Andrzejewski T.M."/>
            <person name="Davidsen T.M."/>
            <person name="Wayne K.J."/>
            <person name="Tettelin H."/>
            <person name="Glass J.I."/>
            <person name="Winkler M.E."/>
        </authorList>
    </citation>
    <scope>NUCLEOTIDE SEQUENCE [LARGE SCALE GENOMIC DNA]</scope>
    <source>
        <strain>D39 / NCTC 7466</strain>
    </source>
</reference>
<feature type="chain" id="PRO_1000025838" description="Chaperonin GroEL">
    <location>
        <begin position="1"/>
        <end position="540"/>
    </location>
</feature>
<feature type="binding site" evidence="1">
    <location>
        <begin position="29"/>
        <end position="32"/>
    </location>
    <ligand>
        <name>ATP</name>
        <dbReference type="ChEBI" id="CHEBI:30616"/>
    </ligand>
</feature>
<feature type="binding site" evidence="1">
    <location>
        <begin position="86"/>
        <end position="90"/>
    </location>
    <ligand>
        <name>ATP</name>
        <dbReference type="ChEBI" id="CHEBI:30616"/>
    </ligand>
</feature>
<feature type="binding site" evidence="1">
    <location>
        <position position="413"/>
    </location>
    <ligand>
        <name>ATP</name>
        <dbReference type="ChEBI" id="CHEBI:30616"/>
    </ligand>
</feature>
<feature type="binding site" evidence="1">
    <location>
        <begin position="476"/>
        <end position="478"/>
    </location>
    <ligand>
        <name>ATP</name>
        <dbReference type="ChEBI" id="CHEBI:30616"/>
    </ligand>
</feature>
<feature type="binding site" evidence="1">
    <location>
        <position position="492"/>
    </location>
    <ligand>
        <name>ATP</name>
        <dbReference type="ChEBI" id="CHEBI:30616"/>
    </ligand>
</feature>
<evidence type="ECO:0000255" key="1">
    <source>
        <dbReference type="HAMAP-Rule" id="MF_00600"/>
    </source>
</evidence>